<accession>Q9YGM9</accession>
<protein>
    <recommendedName>
        <fullName>Caveolin-2</fullName>
    </recommendedName>
</protein>
<comment type="function">
    <text evidence="1">May act as a scaffolding protein within caveolar membranes. Interacts directly with G-protein alpha subunits and can functionally regulate their activity (By similarity).</text>
</comment>
<comment type="subunit">
    <text evidence="1">Homooligomer.</text>
</comment>
<comment type="subcellular location">
    <subcellularLocation>
        <location evidence="1">Golgi apparatus membrane</location>
        <topology evidence="1">Peripheral membrane protein</topology>
    </subcellularLocation>
    <subcellularLocation>
        <location evidence="1">Cell membrane</location>
        <topology evidence="1">Peripheral membrane protein</topology>
    </subcellularLocation>
    <subcellularLocation>
        <location evidence="1">Membrane</location>
        <location evidence="1">Caveola</location>
        <topology evidence="1">Peripheral membrane protein</topology>
    </subcellularLocation>
    <text evidence="1">Potential hairpin-like structure in the membrane. Membrane protein of caveolae (By similarity).</text>
</comment>
<comment type="similarity">
    <text evidence="3">Belongs to the caveolin family.</text>
</comment>
<name>CAV2_TAKRU</name>
<dbReference type="EMBL" id="AJ010316">
    <property type="protein sequence ID" value="CAA09081.1"/>
    <property type="molecule type" value="Genomic_DNA"/>
</dbReference>
<dbReference type="EMBL" id="AC090119">
    <property type="protein sequence ID" value="AAL40363.1"/>
    <property type="molecule type" value="Genomic_DNA"/>
</dbReference>
<dbReference type="RefSeq" id="NP_001163826.1">
    <property type="nucleotide sequence ID" value="NM_001170355.1"/>
</dbReference>
<dbReference type="SMR" id="Q9YGM9"/>
<dbReference type="STRING" id="31033.ENSTRUP00000080415"/>
<dbReference type="Ensembl" id="ENSTRUT00000075396.1">
    <property type="protein sequence ID" value="ENSTRUP00000080415.1"/>
    <property type="gene ID" value="ENSTRUG00000026846.1"/>
</dbReference>
<dbReference type="GeneID" id="100137153"/>
<dbReference type="KEGG" id="tru:100137153"/>
<dbReference type="CTD" id="858"/>
<dbReference type="eggNOG" id="ENOG502RZYX">
    <property type="taxonomic scope" value="Eukaryota"/>
</dbReference>
<dbReference type="GeneTree" id="ENSGT00950000183006"/>
<dbReference type="HOGENOM" id="CLU_102582_2_0_1"/>
<dbReference type="InParanoid" id="Q9YGM9"/>
<dbReference type="OMA" id="TRIFMDD"/>
<dbReference type="OrthoDB" id="5917823at2759"/>
<dbReference type="TreeFam" id="TF315736"/>
<dbReference type="Proteomes" id="UP000005226">
    <property type="component" value="Chromosome 9"/>
</dbReference>
<dbReference type="GO" id="GO:0005901">
    <property type="term" value="C:caveola"/>
    <property type="evidence" value="ECO:0007669"/>
    <property type="project" value="UniProtKB-SubCell"/>
</dbReference>
<dbReference type="GO" id="GO:0031410">
    <property type="term" value="C:cytoplasmic vesicle"/>
    <property type="evidence" value="ECO:0007669"/>
    <property type="project" value="TreeGrafter"/>
</dbReference>
<dbReference type="GO" id="GO:0005925">
    <property type="term" value="C:focal adhesion"/>
    <property type="evidence" value="ECO:0007669"/>
    <property type="project" value="TreeGrafter"/>
</dbReference>
<dbReference type="GO" id="GO:0000139">
    <property type="term" value="C:Golgi membrane"/>
    <property type="evidence" value="ECO:0007669"/>
    <property type="project" value="UniProtKB-SubCell"/>
</dbReference>
<dbReference type="GO" id="GO:0048471">
    <property type="term" value="C:perinuclear region of cytoplasm"/>
    <property type="evidence" value="ECO:0007669"/>
    <property type="project" value="TreeGrafter"/>
</dbReference>
<dbReference type="GO" id="GO:0042383">
    <property type="term" value="C:sarcolemma"/>
    <property type="evidence" value="ECO:0007669"/>
    <property type="project" value="TreeGrafter"/>
</dbReference>
<dbReference type="GO" id="GO:0060090">
    <property type="term" value="F:molecular adaptor activity"/>
    <property type="evidence" value="ECO:0007669"/>
    <property type="project" value="TreeGrafter"/>
</dbReference>
<dbReference type="GO" id="GO:0019901">
    <property type="term" value="F:protein kinase binding"/>
    <property type="evidence" value="ECO:0007669"/>
    <property type="project" value="TreeGrafter"/>
</dbReference>
<dbReference type="GO" id="GO:0070836">
    <property type="term" value="P:caveola assembly"/>
    <property type="evidence" value="ECO:0007669"/>
    <property type="project" value="InterPro"/>
</dbReference>
<dbReference type="GO" id="GO:0030154">
    <property type="term" value="P:cell differentiation"/>
    <property type="evidence" value="ECO:0007669"/>
    <property type="project" value="TreeGrafter"/>
</dbReference>
<dbReference type="GO" id="GO:0008286">
    <property type="term" value="P:insulin receptor signaling pathway"/>
    <property type="evidence" value="ECO:0007669"/>
    <property type="project" value="TreeGrafter"/>
</dbReference>
<dbReference type="GO" id="GO:0001937">
    <property type="term" value="P:negative regulation of endothelial cell proliferation"/>
    <property type="evidence" value="ECO:0007669"/>
    <property type="project" value="TreeGrafter"/>
</dbReference>
<dbReference type="GO" id="GO:0051480">
    <property type="term" value="P:regulation of cytosolic calcium ion concentration"/>
    <property type="evidence" value="ECO:0007669"/>
    <property type="project" value="TreeGrafter"/>
</dbReference>
<dbReference type="InterPro" id="IPR001612">
    <property type="entry name" value="Caveolin"/>
</dbReference>
<dbReference type="InterPro" id="IPR018361">
    <property type="entry name" value="Caveolin_CS"/>
</dbReference>
<dbReference type="PANTHER" id="PTHR10844">
    <property type="entry name" value="CAVEOLIN"/>
    <property type="match status" value="1"/>
</dbReference>
<dbReference type="PANTHER" id="PTHR10844:SF3">
    <property type="entry name" value="CAVEOLIN-2"/>
    <property type="match status" value="1"/>
</dbReference>
<dbReference type="Pfam" id="PF01146">
    <property type="entry name" value="Caveolin"/>
    <property type="match status" value="1"/>
</dbReference>
<dbReference type="PROSITE" id="PS01210">
    <property type="entry name" value="CAVEOLIN"/>
    <property type="match status" value="1"/>
</dbReference>
<organism>
    <name type="scientific">Takifugu rubripes</name>
    <name type="common">Japanese pufferfish</name>
    <name type="synonym">Fugu rubripes</name>
    <dbReference type="NCBI Taxonomy" id="31033"/>
    <lineage>
        <taxon>Eukaryota</taxon>
        <taxon>Metazoa</taxon>
        <taxon>Chordata</taxon>
        <taxon>Craniata</taxon>
        <taxon>Vertebrata</taxon>
        <taxon>Euteleostomi</taxon>
        <taxon>Actinopterygii</taxon>
        <taxon>Neopterygii</taxon>
        <taxon>Teleostei</taxon>
        <taxon>Neoteleostei</taxon>
        <taxon>Acanthomorphata</taxon>
        <taxon>Eupercaria</taxon>
        <taxon>Tetraodontiformes</taxon>
        <taxon>Tetradontoidea</taxon>
        <taxon>Tetraodontidae</taxon>
        <taxon>Takifugu</taxon>
    </lineage>
</organism>
<gene>
    <name type="primary">cav2</name>
    <name type="synonym">cav-2</name>
</gene>
<sequence length="162" mass="18236">MGLEKEKLECSIIMDEDEFNRSIEPILSKKARLYSSAPDRDPHDINAQLKVGFEDVIAEPASAHSFDRVWIGSSATFELVKFIFYRLLTTLLAVPAAFILGVVFGVLSCIHIWLVMPVTRSFLMLLPSIQVVWKSVTDMFITPLFHSMGRSLSSIQVRTSDT</sequence>
<feature type="chain" id="PRO_0000144139" description="Caveolin-2">
    <location>
        <begin position="1"/>
        <end position="162"/>
    </location>
</feature>
<feature type="topological domain" description="Cytoplasmic" evidence="2">
    <location>
        <begin position="1"/>
        <end position="86"/>
    </location>
</feature>
<feature type="intramembrane region" description="Helical" evidence="2">
    <location>
        <begin position="87"/>
        <end position="107"/>
    </location>
</feature>
<feature type="topological domain" description="Cytoplasmic" evidence="2">
    <location>
        <begin position="108"/>
        <end position="162"/>
    </location>
</feature>
<proteinExistence type="inferred from homology"/>
<evidence type="ECO:0000250" key="1"/>
<evidence type="ECO:0000255" key="2"/>
<evidence type="ECO:0000305" key="3"/>
<keyword id="KW-1003">Cell membrane</keyword>
<keyword id="KW-0333">Golgi apparatus</keyword>
<keyword id="KW-0472">Membrane</keyword>
<keyword id="KW-1185">Reference proteome</keyword>
<reference key="1">
    <citation type="submission" date="1998-08" db="EMBL/GenBank/DDBJ databases">
        <authorList>
            <person name="Cottage A.J."/>
        </authorList>
    </citation>
    <scope>NUCLEOTIDE SEQUENCE [GENOMIC DNA]</scope>
</reference>
<reference key="2">
    <citation type="journal article" date="2003" name="Nature">
        <title>Comparative analyses of multi-species sequences from targeted genomic regions.</title>
        <authorList>
            <person name="Thomas J.W."/>
            <person name="Touchman J.W."/>
            <person name="Blakesley R.W."/>
            <person name="Bouffard G.G."/>
            <person name="Beckstrom-Sternberg S.M."/>
            <person name="Margulies E.H."/>
            <person name="Blanchette M."/>
            <person name="Siepel A.C."/>
            <person name="Thomas P.J."/>
            <person name="McDowell J.C."/>
            <person name="Maskeri B."/>
            <person name="Hansen N.F."/>
            <person name="Schwartz M.S."/>
            <person name="Weber R.J."/>
            <person name="Kent W.J."/>
            <person name="Karolchik D."/>
            <person name="Bruen T.C."/>
            <person name="Bevan R."/>
            <person name="Cutler D.J."/>
            <person name="Schwartz S."/>
            <person name="Elnitski L."/>
            <person name="Idol J.R."/>
            <person name="Prasad A.B."/>
            <person name="Lee-Lin S.-Q."/>
            <person name="Maduro V.V.B."/>
            <person name="Summers T.J."/>
            <person name="Portnoy M.E."/>
            <person name="Dietrich N.L."/>
            <person name="Akhter N."/>
            <person name="Ayele K."/>
            <person name="Benjamin B."/>
            <person name="Cariaga K."/>
            <person name="Brinkley C.P."/>
            <person name="Brooks S.Y."/>
            <person name="Granite S."/>
            <person name="Guan X."/>
            <person name="Gupta J."/>
            <person name="Haghighi P."/>
            <person name="Ho S.-L."/>
            <person name="Huang M.C."/>
            <person name="Karlins E."/>
            <person name="Laric P.L."/>
            <person name="Legaspi R."/>
            <person name="Lim M.J."/>
            <person name="Maduro Q.L."/>
            <person name="Masiello C.A."/>
            <person name="Mastrian S.D."/>
            <person name="McCloskey J.C."/>
            <person name="Pearson R."/>
            <person name="Stantripop S."/>
            <person name="Tiongson E.E."/>
            <person name="Tran J.T."/>
            <person name="Tsurgeon C."/>
            <person name="Vogt J.L."/>
            <person name="Walker M.A."/>
            <person name="Wetherby K.D."/>
            <person name="Wiggins L.S."/>
            <person name="Young A.C."/>
            <person name="Zhang L.-H."/>
            <person name="Osoegawa K."/>
            <person name="Zhu B."/>
            <person name="Zhao B."/>
            <person name="Shu C.L."/>
            <person name="De Jong P.J."/>
            <person name="Lawrence C.E."/>
            <person name="Smit A.F."/>
            <person name="Chakravarti A."/>
            <person name="Haussler D."/>
            <person name="Green P."/>
            <person name="Miller W."/>
            <person name="Green E.D."/>
        </authorList>
    </citation>
    <scope>NUCLEOTIDE SEQUENCE [LARGE SCALE GENOMIC DNA]</scope>
</reference>